<comment type="function">
    <text evidence="1">Involved in the catabolism of homogentisate (2,5-dihydroxyphenylacetate or 2,5-OH-PhAc), a central intermediate in the degradation of phenylalanine and tyrosine. Catalyzes the oxidative ring cleavage of the aromatic ring of homogentisate to yield maleylacetoacetate.</text>
</comment>
<comment type="catalytic activity">
    <reaction evidence="1">
        <text>homogentisate + O2 = 4-maleylacetoacetate + H(+)</text>
        <dbReference type="Rhea" id="RHEA:15449"/>
        <dbReference type="ChEBI" id="CHEBI:15378"/>
        <dbReference type="ChEBI" id="CHEBI:15379"/>
        <dbReference type="ChEBI" id="CHEBI:16169"/>
        <dbReference type="ChEBI" id="CHEBI:17105"/>
        <dbReference type="EC" id="1.13.11.5"/>
    </reaction>
</comment>
<comment type="cofactor">
    <cofactor evidence="1">
        <name>Fe cation</name>
        <dbReference type="ChEBI" id="CHEBI:24875"/>
    </cofactor>
</comment>
<comment type="pathway">
    <text evidence="1">Amino-acid degradation; L-phenylalanine degradation; acetoacetate and fumarate from L-phenylalanine: step 4/6.</text>
</comment>
<comment type="subunit">
    <text evidence="1">Hexamer; dimer of trimers.</text>
</comment>
<comment type="similarity">
    <text evidence="1">Belongs to the homogentisate dioxygenase family.</text>
</comment>
<comment type="sequence caution" evidence="2">
    <conflict type="erroneous initiation">
        <sequence resource="EMBL-CDS" id="AAZ63280"/>
    </conflict>
    <text>Extended N-terminus.</text>
</comment>
<gene>
    <name evidence="1" type="primary">hmgA</name>
    <name type="ordered locus">Reut_B3923</name>
</gene>
<evidence type="ECO:0000255" key="1">
    <source>
        <dbReference type="HAMAP-Rule" id="MF_00334"/>
    </source>
</evidence>
<evidence type="ECO:0000305" key="2"/>
<dbReference type="EC" id="1.13.11.5" evidence="1"/>
<dbReference type="EMBL" id="CP000091">
    <property type="protein sequence ID" value="AAZ63280.1"/>
    <property type="status" value="ALT_INIT"/>
    <property type="molecule type" value="Genomic_DNA"/>
</dbReference>
<dbReference type="SMR" id="Q46UA4"/>
<dbReference type="STRING" id="264198.Reut_B3923"/>
<dbReference type="KEGG" id="reu:Reut_B3923"/>
<dbReference type="eggNOG" id="COG3508">
    <property type="taxonomic scope" value="Bacteria"/>
</dbReference>
<dbReference type="HOGENOM" id="CLU_027174_0_0_4"/>
<dbReference type="OrthoDB" id="9811253at2"/>
<dbReference type="UniPathway" id="UPA00139">
    <property type="reaction ID" value="UER00339"/>
</dbReference>
<dbReference type="GO" id="GO:0005737">
    <property type="term" value="C:cytoplasm"/>
    <property type="evidence" value="ECO:0007669"/>
    <property type="project" value="TreeGrafter"/>
</dbReference>
<dbReference type="GO" id="GO:0004411">
    <property type="term" value="F:homogentisate 1,2-dioxygenase activity"/>
    <property type="evidence" value="ECO:0007669"/>
    <property type="project" value="UniProtKB-UniRule"/>
</dbReference>
<dbReference type="GO" id="GO:0005506">
    <property type="term" value="F:iron ion binding"/>
    <property type="evidence" value="ECO:0007669"/>
    <property type="project" value="UniProtKB-UniRule"/>
</dbReference>
<dbReference type="GO" id="GO:0006559">
    <property type="term" value="P:L-phenylalanine catabolic process"/>
    <property type="evidence" value="ECO:0007669"/>
    <property type="project" value="UniProtKB-UniRule"/>
</dbReference>
<dbReference type="GO" id="GO:0006572">
    <property type="term" value="P:tyrosine catabolic process"/>
    <property type="evidence" value="ECO:0007669"/>
    <property type="project" value="UniProtKB-UniRule"/>
</dbReference>
<dbReference type="CDD" id="cd07000">
    <property type="entry name" value="cupin_HGO_N"/>
    <property type="match status" value="1"/>
</dbReference>
<dbReference type="FunFam" id="2.60.120.10:FF:000034">
    <property type="entry name" value="Homogentisate 1,2-dioxygenase"/>
    <property type="match status" value="1"/>
</dbReference>
<dbReference type="Gene3D" id="2.60.120.10">
    <property type="entry name" value="Jelly Rolls"/>
    <property type="match status" value="1"/>
</dbReference>
<dbReference type="HAMAP" id="MF_00334">
    <property type="entry name" value="Homogentis_dioxygen"/>
    <property type="match status" value="1"/>
</dbReference>
<dbReference type="InterPro" id="IPR046451">
    <property type="entry name" value="HgmA_C"/>
</dbReference>
<dbReference type="InterPro" id="IPR046452">
    <property type="entry name" value="HgmA_N"/>
</dbReference>
<dbReference type="InterPro" id="IPR005708">
    <property type="entry name" value="Homogentis_dOase"/>
</dbReference>
<dbReference type="InterPro" id="IPR022950">
    <property type="entry name" value="Homogentis_dOase_bac"/>
</dbReference>
<dbReference type="InterPro" id="IPR014710">
    <property type="entry name" value="RmlC-like_jellyroll"/>
</dbReference>
<dbReference type="InterPro" id="IPR011051">
    <property type="entry name" value="RmlC_Cupin_sf"/>
</dbReference>
<dbReference type="NCBIfam" id="TIGR01015">
    <property type="entry name" value="hmgA"/>
    <property type="match status" value="1"/>
</dbReference>
<dbReference type="PANTHER" id="PTHR11056">
    <property type="entry name" value="HOMOGENTISATE 1,2-DIOXYGENASE"/>
    <property type="match status" value="1"/>
</dbReference>
<dbReference type="PANTHER" id="PTHR11056:SF0">
    <property type="entry name" value="HOMOGENTISATE 1,2-DIOXYGENASE"/>
    <property type="match status" value="1"/>
</dbReference>
<dbReference type="Pfam" id="PF04209">
    <property type="entry name" value="HgmA_C"/>
    <property type="match status" value="1"/>
</dbReference>
<dbReference type="Pfam" id="PF20510">
    <property type="entry name" value="HgmA_N"/>
    <property type="match status" value="1"/>
</dbReference>
<dbReference type="SUPFAM" id="SSF51182">
    <property type="entry name" value="RmlC-like cupins"/>
    <property type="match status" value="1"/>
</dbReference>
<accession>Q46UA4</accession>
<protein>
    <recommendedName>
        <fullName evidence="1">Homogentisate 1,2-dioxygenase</fullName>
        <shortName evidence="1">HGDO</shortName>
        <ecNumber evidence="1">1.13.11.5</ecNumber>
    </recommendedName>
    <alternativeName>
        <fullName evidence="1">Homogentisate oxygenase</fullName>
    </alternativeName>
    <alternativeName>
        <fullName evidence="1">Homogentisic acid oxidase</fullName>
    </alternativeName>
    <alternativeName>
        <fullName evidence="1">Homogentisicase</fullName>
    </alternativeName>
</protein>
<keyword id="KW-0223">Dioxygenase</keyword>
<keyword id="KW-0408">Iron</keyword>
<keyword id="KW-0479">Metal-binding</keyword>
<keyword id="KW-0560">Oxidoreductase</keyword>
<keyword id="KW-0585">Phenylalanine catabolism</keyword>
<keyword id="KW-0828">Tyrosine catabolism</keyword>
<proteinExistence type="inferred from homology"/>
<feature type="chain" id="PRO_0000225794" description="Homogentisate 1,2-dioxygenase">
    <location>
        <begin position="1"/>
        <end position="439"/>
    </location>
</feature>
<feature type="active site" description="Proton acceptor" evidence="1">
    <location>
        <position position="293"/>
    </location>
</feature>
<feature type="binding site" evidence="1">
    <location>
        <position position="336"/>
    </location>
    <ligand>
        <name>Fe cation</name>
        <dbReference type="ChEBI" id="CHEBI:24875"/>
    </ligand>
</feature>
<feature type="binding site" evidence="1">
    <location>
        <position position="342"/>
    </location>
    <ligand>
        <name>Fe cation</name>
        <dbReference type="ChEBI" id="CHEBI:24875"/>
    </ligand>
</feature>
<feature type="binding site" evidence="1">
    <location>
        <position position="351"/>
    </location>
    <ligand>
        <name>homogentisate</name>
        <dbReference type="ChEBI" id="CHEBI:16169"/>
    </ligand>
</feature>
<feature type="binding site" evidence="1">
    <location>
        <position position="372"/>
    </location>
    <ligand>
        <name>Fe cation</name>
        <dbReference type="ChEBI" id="CHEBI:24875"/>
    </ligand>
</feature>
<feature type="binding site" evidence="1">
    <location>
        <position position="372"/>
    </location>
    <ligand>
        <name>homogentisate</name>
        <dbReference type="ChEBI" id="CHEBI:16169"/>
    </ligand>
</feature>
<name>HGD_CUPPJ</name>
<sequence>MNLTHTQLAEHGYMSGFANEFATEALPGALPVGQNSPQRAPYGLYAEQLSGTAFTAPRAHNRRSWLYRIRPGAVHKPFTLVEQSRFLSRFDEVPPSPNQMRWSPPAMPTTPTDFIDGIVTMAGNGGPDAMTGCGIHLYLANQSMQDRFFYNADGEMLIVPQQGRVRFVTEMGRLDVEPQEIVVIPRGVRFRVELPDGEARGYICENYGALFKLPDLGVIGSNGLANPRDFMTPVAAYEDREGDFELVAKFQGNLWRADIGHSPLDVVAWHGNFAPYKYDLRRFNTIGSISFDHPDPSIFLVLQSPSDTPGVDTIDFVIFGPRWLAMENSFRPPWFHRNIASEFMGLITGVYDAKADGFAPGGASLHNCMSGHGPDADTFAKATSADTSTPHHITDTMAFMFETPGVIRPTPYAARSASLQQDYYTCWQGLKKHFNPNVR</sequence>
<organism>
    <name type="scientific">Cupriavidus pinatubonensis (strain JMP 134 / LMG 1197)</name>
    <name type="common">Cupriavidus necator (strain JMP 134)</name>
    <dbReference type="NCBI Taxonomy" id="264198"/>
    <lineage>
        <taxon>Bacteria</taxon>
        <taxon>Pseudomonadati</taxon>
        <taxon>Pseudomonadota</taxon>
        <taxon>Betaproteobacteria</taxon>
        <taxon>Burkholderiales</taxon>
        <taxon>Burkholderiaceae</taxon>
        <taxon>Cupriavidus</taxon>
    </lineage>
</organism>
<reference key="1">
    <citation type="journal article" date="2010" name="PLoS ONE">
        <title>The complete multipartite genome sequence of Cupriavidus necator JMP134, a versatile pollutant degrader.</title>
        <authorList>
            <person name="Lykidis A."/>
            <person name="Perez-Pantoja D."/>
            <person name="Ledger T."/>
            <person name="Mavromatis K."/>
            <person name="Anderson I.J."/>
            <person name="Ivanova N.N."/>
            <person name="Hooper S.D."/>
            <person name="Lapidus A."/>
            <person name="Lucas S."/>
            <person name="Gonzalez B."/>
            <person name="Kyrpides N.C."/>
        </authorList>
    </citation>
    <scope>NUCLEOTIDE SEQUENCE [LARGE SCALE GENOMIC DNA]</scope>
    <source>
        <strain>JMP134 / LMG 1197</strain>
    </source>
</reference>